<comment type="function">
    <text evidence="6">Sphingomyelin phosphodiesterase (sphingomyelinase) that converts sphingomyelin (N-acyl-sphingoid-1-phosphocholine) to ceramide (N-acyl-sphingoid base) and phosphocholine at acidic pH. Displays its enzymatic activity when secreted. May play distinct roles in signaling.</text>
</comment>
<comment type="catalytic activity">
    <reaction evidence="6">
        <text>a sphingomyelin + H2O = phosphocholine + an N-acylsphing-4-enine + H(+)</text>
        <dbReference type="Rhea" id="RHEA:19253"/>
        <dbReference type="ChEBI" id="CHEBI:15377"/>
        <dbReference type="ChEBI" id="CHEBI:15378"/>
        <dbReference type="ChEBI" id="CHEBI:17636"/>
        <dbReference type="ChEBI" id="CHEBI:52639"/>
        <dbReference type="ChEBI" id="CHEBI:295975"/>
        <dbReference type="EC" id="3.1.4.12"/>
    </reaction>
    <physiologicalReaction direction="left-to-right" evidence="6">
        <dbReference type="Rhea" id="RHEA:19254"/>
    </physiologicalReaction>
</comment>
<comment type="catalytic activity">
    <reaction evidence="9">
        <text>an N-acyl-15-methylhexadecasphing-4-enine-1-phosphocholine + H2O = an N-acyl-15-methylhexadecasphing-4-enine + phosphocholine + H(+)</text>
        <dbReference type="Rhea" id="RHEA:34739"/>
        <dbReference type="ChEBI" id="CHEBI:15377"/>
        <dbReference type="ChEBI" id="CHEBI:15378"/>
        <dbReference type="ChEBI" id="CHEBI:70775"/>
        <dbReference type="ChEBI" id="CHEBI:70846"/>
        <dbReference type="ChEBI" id="CHEBI:295975"/>
    </reaction>
    <physiologicalReaction direction="left-to-right" evidence="9">
        <dbReference type="Rhea" id="RHEA:34740"/>
    </physiologicalReaction>
</comment>
<comment type="cofactor">
    <cofactor evidence="6">
        <name>Zn(2+)</name>
        <dbReference type="ChEBI" id="CHEBI:29105"/>
    </cofactor>
    <text evidence="2">Binds 2 Zn(2+) per subunit.</text>
</comment>
<comment type="biophysicochemical properties">
    <kinetics>
        <KM evidence="6">288 uM for sphingomyelin (N-acyl-sphing-4-enine-1-phosphocholine) (at pH 5.0)</KM>
        <Vmax evidence="6">4.8 umol/h/mg enzyme (at pH 5.0)</Vmax>
    </kinetics>
</comment>
<comment type="pathway">
    <text evidence="6">Lipid metabolism; sphingolipid metabolism.</text>
</comment>
<comment type="subcellular location">
    <subcellularLocation>
        <location evidence="6">Secreted</location>
    </subcellularLocation>
    <text evidence="6">Only the secreted form is enzymatically active.</text>
</comment>
<comment type="developmental stage">
    <text evidence="6">Preferentially expressed in postembryonic development.</text>
</comment>
<comment type="miscellaneous">
    <text evidence="6">Requires Zn(2+) to be fully active.</text>
</comment>
<comment type="miscellaneous">
    <text evidence="6">There are two types of sphingomyelinases: asm (acid), and nsm (neutral). Only acid sphingomyelinases have been found in worms.</text>
</comment>
<comment type="similarity">
    <text evidence="8">Belongs to the acid sphingomyelinase family.</text>
</comment>
<feature type="signal peptide" evidence="3">
    <location>
        <begin position="1"/>
        <end position="22"/>
    </location>
</feature>
<feature type="chain" id="PRO_0000002326" description="Sphingomyelin phosphodiesterase 2">
    <location>
        <begin position="23"/>
        <end position="618"/>
    </location>
</feature>
<feature type="domain" description="Saposin B-type" evidence="4">
    <location>
        <begin position="68"/>
        <end position="151"/>
    </location>
</feature>
<feature type="binding site" evidence="1">
    <location>
        <position position="189"/>
    </location>
    <ligand>
        <name>Zn(2+)</name>
        <dbReference type="ChEBI" id="CHEBI:29105"/>
        <label>1</label>
    </ligand>
</feature>
<feature type="binding site" evidence="1">
    <location>
        <position position="191"/>
    </location>
    <ligand>
        <name>Zn(2+)</name>
        <dbReference type="ChEBI" id="CHEBI:29105"/>
        <label>1</label>
    </ligand>
</feature>
<feature type="binding site" evidence="1">
    <location>
        <position position="278"/>
    </location>
    <ligand>
        <name>Zn(2+)</name>
        <dbReference type="ChEBI" id="CHEBI:29105"/>
        <label>1</label>
    </ligand>
</feature>
<feature type="binding site" evidence="1">
    <location>
        <position position="278"/>
    </location>
    <ligand>
        <name>Zn(2+)</name>
        <dbReference type="ChEBI" id="CHEBI:29105"/>
        <label>2</label>
    </ligand>
</feature>
<feature type="binding site" evidence="1">
    <location>
        <position position="318"/>
    </location>
    <ligand>
        <name>Zn(2+)</name>
        <dbReference type="ChEBI" id="CHEBI:29105"/>
        <label>2</label>
    </ligand>
</feature>
<feature type="binding site" evidence="1">
    <location>
        <position position="427"/>
    </location>
    <ligand>
        <name>Zn(2+)</name>
        <dbReference type="ChEBI" id="CHEBI:29105"/>
        <label>2</label>
    </ligand>
</feature>
<feature type="binding site" evidence="1">
    <location>
        <position position="461"/>
    </location>
    <ligand>
        <name>Zn(2+)</name>
        <dbReference type="ChEBI" id="CHEBI:29105"/>
        <label>2</label>
    </ligand>
</feature>
<feature type="binding site" evidence="1">
    <location>
        <position position="463"/>
    </location>
    <ligand>
        <name>Zn(2+)</name>
        <dbReference type="ChEBI" id="CHEBI:29105"/>
        <label>1</label>
    </ligand>
</feature>
<feature type="glycosylation site" description="N-linked (GlcNAc...) asparagine" evidence="4">
    <location>
        <position position="89"/>
    </location>
</feature>
<feature type="glycosylation site" description="N-linked (GlcNAc...) asparagine" evidence="4">
    <location>
        <position position="159"/>
    </location>
</feature>
<feature type="glycosylation site" description="N-linked (GlcNAc...) asparagine" evidence="4">
    <location>
        <position position="298"/>
    </location>
</feature>
<feature type="glycosylation site" description="N-linked (GlcNAc...) asparagine" evidence="4 5">
    <location>
        <position position="525"/>
    </location>
</feature>
<feature type="glycosylation site" description="N-linked (GlcNAc...) asparagine" evidence="4">
    <location>
        <position position="568"/>
    </location>
</feature>
<feature type="disulfide bond" evidence="4">
    <location>
        <begin position="72"/>
        <end position="147"/>
    </location>
</feature>
<feature type="disulfide bond" evidence="4">
    <location>
        <begin position="75"/>
        <end position="140"/>
    </location>
</feature>
<feature type="disulfide bond" evidence="4">
    <location>
        <begin position="103"/>
        <end position="114"/>
    </location>
</feature>
<feature type="disulfide bond" evidence="4">
    <location>
        <begin position="204"/>
        <end position="216"/>
    </location>
</feature>
<feature type="disulfide bond" evidence="4">
    <location>
        <begin position="217"/>
        <end position="249"/>
    </location>
</feature>
<feature type="disulfide bond" evidence="4">
    <location>
        <begin position="387"/>
        <end position="435"/>
    </location>
</feature>
<feature type="disulfide bond" evidence="4">
    <location>
        <begin position="588"/>
        <end position="594"/>
    </location>
</feature>
<feature type="disulfide bond" evidence="4">
    <location>
        <begin position="600"/>
        <end position="613"/>
    </location>
</feature>
<evidence type="ECO:0000250" key="1">
    <source>
        <dbReference type="UniProtKB" id="P17405"/>
    </source>
</evidence>
<evidence type="ECO:0000250" key="2">
    <source>
        <dbReference type="UniProtKB" id="Q92484"/>
    </source>
</evidence>
<evidence type="ECO:0000255" key="3"/>
<evidence type="ECO:0000255" key="4">
    <source>
        <dbReference type="PROSITE-ProRule" id="PRU00415"/>
    </source>
</evidence>
<evidence type="ECO:0000269" key="5">
    <source>
    </source>
</evidence>
<evidence type="ECO:0000269" key="6">
    <source>
    </source>
</evidence>
<evidence type="ECO:0000303" key="7">
    <source>
    </source>
</evidence>
<evidence type="ECO:0000305" key="8"/>
<evidence type="ECO:0000305" key="9">
    <source>
    </source>
</evidence>
<keyword id="KW-1015">Disulfide bond</keyword>
<keyword id="KW-0325">Glycoprotein</keyword>
<keyword id="KW-0326">Glycosidase</keyword>
<keyword id="KW-0378">Hydrolase</keyword>
<keyword id="KW-0443">Lipid metabolism</keyword>
<keyword id="KW-0479">Metal-binding</keyword>
<keyword id="KW-1185">Reference proteome</keyword>
<keyword id="KW-0964">Secreted</keyword>
<keyword id="KW-0732">Signal</keyword>
<keyword id="KW-0746">Sphingolipid metabolism</keyword>
<keyword id="KW-0862">Zinc</keyword>
<reference key="1">
    <citation type="journal article" date="1998" name="J. Biol. Chem.">
        <title>Caenorhabditis elegans contains two distinct acid sphingomyelinases.</title>
        <authorList>
            <person name="Lin X."/>
            <person name="Hengartner M.O."/>
            <person name="Kolesnick R."/>
        </authorList>
    </citation>
    <scope>NUCLEOTIDE SEQUENCE [GENOMIC DNA]</scope>
    <scope>FUNCTION</scope>
    <scope>CATALYTIC ACTIVITY</scope>
    <scope>PATHWAY</scope>
    <scope>COFACTOR</scope>
    <scope>SUBCELLULAR LOCATION</scope>
    <scope>DEVELOPMENTAL STAGE</scope>
    <scope>BIOPHYSICOCHEMICAL PROPERTIES</scope>
</reference>
<reference key="2">
    <citation type="journal article" date="1998" name="Science">
        <title>Genome sequence of the nematode C. elegans: a platform for investigating biology.</title>
        <authorList>
            <consortium name="The C. elegans sequencing consortium"/>
        </authorList>
    </citation>
    <scope>NUCLEOTIDE SEQUENCE [LARGE SCALE GENOMIC DNA]</scope>
    <source>
        <strain>Bristol N2</strain>
    </source>
</reference>
<reference key="3">
    <citation type="journal article" date="2007" name="Mol. Cell. Proteomics">
        <title>Proteomics reveals N-linked glycoprotein diversity in Caenorhabditis elegans and suggests an atypical translocation mechanism for integral membrane proteins.</title>
        <authorList>
            <person name="Kaji H."/>
            <person name="Kamiie J."/>
            <person name="Kawakami H."/>
            <person name="Kido K."/>
            <person name="Yamauchi Y."/>
            <person name="Shinkawa T."/>
            <person name="Taoka M."/>
            <person name="Takahashi N."/>
            <person name="Isobe T."/>
        </authorList>
    </citation>
    <scope>GLYCOSYLATION [LARGE SCALE ANALYSIS] AT ASN-525</scope>
    <scope>IDENTIFICATION BY MASS SPECTROMETRY</scope>
    <source>
        <strain>Bristol N2</strain>
    </source>
</reference>
<proteinExistence type="evidence at protein level"/>
<protein>
    <recommendedName>
        <fullName>Sphingomyelin phosphodiesterase 2</fullName>
        <ecNumber evidence="6">3.1.4.12</ecNumber>
    </recommendedName>
    <alternativeName>
        <fullName>Acid sphingomyelinase 2</fullName>
        <shortName evidence="7">ASM-2</shortName>
    </alternativeName>
</protein>
<gene>
    <name type="primary">asm-2</name>
    <name type="ORF">ZK455.4</name>
</gene>
<name>ASM2_CAEEL</name>
<dbReference type="EC" id="3.1.4.12" evidence="6"/>
<dbReference type="EMBL" id="Z66567">
    <property type="protein sequence ID" value="CAA91493.2"/>
    <property type="molecule type" value="Genomic_DNA"/>
</dbReference>
<dbReference type="PIR" id="T27869">
    <property type="entry name" value="T27869"/>
</dbReference>
<dbReference type="RefSeq" id="NP_509894.2">
    <property type="nucleotide sequence ID" value="NM_077493.4"/>
</dbReference>
<dbReference type="SMR" id="Q23498"/>
<dbReference type="FunCoup" id="Q23498">
    <property type="interactions" value="772"/>
</dbReference>
<dbReference type="STRING" id="6239.ZK455.4.1"/>
<dbReference type="SwissLipids" id="SLP:000000010"/>
<dbReference type="GlyCosmos" id="Q23498">
    <property type="glycosylation" value="5 sites, No reported glycans"/>
</dbReference>
<dbReference type="iPTMnet" id="Q23498"/>
<dbReference type="PaxDb" id="6239-ZK455.4"/>
<dbReference type="PeptideAtlas" id="Q23498"/>
<dbReference type="EnsemblMetazoa" id="ZK455.4.1">
    <property type="protein sequence ID" value="ZK455.4.1"/>
    <property type="gene ID" value="WBGene00000212"/>
</dbReference>
<dbReference type="GeneID" id="181323"/>
<dbReference type="KEGG" id="cel:CELE_ZK455.4"/>
<dbReference type="UCSC" id="ZK455.4">
    <property type="organism name" value="c. elegans"/>
</dbReference>
<dbReference type="AGR" id="WB:WBGene00000212"/>
<dbReference type="CTD" id="181323"/>
<dbReference type="WormBase" id="ZK455.4">
    <property type="protein sequence ID" value="CE31674"/>
    <property type="gene ID" value="WBGene00000212"/>
    <property type="gene designation" value="asm-2"/>
</dbReference>
<dbReference type="eggNOG" id="KOG3770">
    <property type="taxonomic scope" value="Eukaryota"/>
</dbReference>
<dbReference type="GeneTree" id="ENSGT00950000183182"/>
<dbReference type="HOGENOM" id="CLU_014743_3_0_1"/>
<dbReference type="InParanoid" id="Q23498"/>
<dbReference type="OMA" id="HNVTVAM"/>
<dbReference type="OrthoDB" id="282973at2759"/>
<dbReference type="PhylomeDB" id="Q23498"/>
<dbReference type="Reactome" id="R-CEL-9840310">
    <property type="pathway name" value="Glycosphingolipid catabolism"/>
</dbReference>
<dbReference type="UniPathway" id="UPA00222"/>
<dbReference type="PRO" id="PR:Q23498"/>
<dbReference type="Proteomes" id="UP000001940">
    <property type="component" value="Chromosome X"/>
</dbReference>
<dbReference type="Bgee" id="WBGene00000212">
    <property type="expression patterns" value="Expressed in larva and 2 other cell types or tissues"/>
</dbReference>
<dbReference type="GO" id="GO:0005576">
    <property type="term" value="C:extracellular region"/>
    <property type="evidence" value="ECO:0000314"/>
    <property type="project" value="UniProtKB"/>
</dbReference>
<dbReference type="GO" id="GO:0005615">
    <property type="term" value="C:extracellular space"/>
    <property type="evidence" value="ECO:0000318"/>
    <property type="project" value="GO_Central"/>
</dbReference>
<dbReference type="GO" id="GO:0005764">
    <property type="term" value="C:lysosome"/>
    <property type="evidence" value="ECO:0000318"/>
    <property type="project" value="GO_Central"/>
</dbReference>
<dbReference type="GO" id="GO:0016020">
    <property type="term" value="C:membrane"/>
    <property type="evidence" value="ECO:0007669"/>
    <property type="project" value="GOC"/>
</dbReference>
<dbReference type="GO" id="GO:0061750">
    <property type="term" value="F:acid sphingomyelin phosphodiesterase activity"/>
    <property type="evidence" value="ECO:0000318"/>
    <property type="project" value="GO_Central"/>
</dbReference>
<dbReference type="GO" id="GO:0016798">
    <property type="term" value="F:hydrolase activity, acting on glycosyl bonds"/>
    <property type="evidence" value="ECO:0007669"/>
    <property type="project" value="UniProtKB-KW"/>
</dbReference>
<dbReference type="GO" id="GO:0046872">
    <property type="term" value="F:metal ion binding"/>
    <property type="evidence" value="ECO:0007669"/>
    <property type="project" value="UniProtKB-KW"/>
</dbReference>
<dbReference type="GO" id="GO:0004767">
    <property type="term" value="F:sphingomyelin phosphodiesterase activity"/>
    <property type="evidence" value="ECO:0000314"/>
    <property type="project" value="UniProtKB"/>
</dbReference>
<dbReference type="GO" id="GO:0046513">
    <property type="term" value="P:ceramide biosynthetic process"/>
    <property type="evidence" value="ECO:0000314"/>
    <property type="project" value="UniProtKB"/>
</dbReference>
<dbReference type="GO" id="GO:0006685">
    <property type="term" value="P:sphingomyelin catabolic process"/>
    <property type="evidence" value="ECO:0000314"/>
    <property type="project" value="UniProtKB"/>
</dbReference>
<dbReference type="CDD" id="cd00842">
    <property type="entry name" value="MPP_ASMase"/>
    <property type="match status" value="1"/>
</dbReference>
<dbReference type="FunFam" id="1.10.225.10:FF:000015">
    <property type="entry name" value="Sphingomyelin phosphodiesterase"/>
    <property type="match status" value="1"/>
</dbReference>
<dbReference type="FunFam" id="3.60.21.10:FF:000162">
    <property type="entry name" value="Sphingomyelin phosphodiesterase"/>
    <property type="match status" value="1"/>
</dbReference>
<dbReference type="Gene3D" id="3.60.21.10">
    <property type="match status" value="1"/>
</dbReference>
<dbReference type="Gene3D" id="1.10.225.10">
    <property type="entry name" value="Saposin-like"/>
    <property type="match status" value="1"/>
</dbReference>
<dbReference type="InterPro" id="IPR045473">
    <property type="entry name" value="ASM_C"/>
</dbReference>
<dbReference type="InterPro" id="IPR041805">
    <property type="entry name" value="ASMase/PPN1_MPP"/>
</dbReference>
<dbReference type="InterPro" id="IPR004843">
    <property type="entry name" value="Calcineurin-like_PHP_ApaH"/>
</dbReference>
<dbReference type="InterPro" id="IPR029052">
    <property type="entry name" value="Metallo-depent_PP-like"/>
</dbReference>
<dbReference type="InterPro" id="IPR007856">
    <property type="entry name" value="SapB_1"/>
</dbReference>
<dbReference type="InterPro" id="IPR011001">
    <property type="entry name" value="Saposin-like"/>
</dbReference>
<dbReference type="InterPro" id="IPR008139">
    <property type="entry name" value="SaposinB_dom"/>
</dbReference>
<dbReference type="InterPro" id="IPR011160">
    <property type="entry name" value="Sphingomy_PDE"/>
</dbReference>
<dbReference type="PANTHER" id="PTHR10340">
    <property type="entry name" value="SPHINGOMYELIN PHOSPHODIESTERASE"/>
    <property type="match status" value="1"/>
</dbReference>
<dbReference type="PANTHER" id="PTHR10340:SF54">
    <property type="entry name" value="SPHINGOMYELIN PHOSPHODIESTERASE 2"/>
    <property type="match status" value="1"/>
</dbReference>
<dbReference type="Pfam" id="PF19272">
    <property type="entry name" value="ASMase_C"/>
    <property type="match status" value="1"/>
</dbReference>
<dbReference type="Pfam" id="PF00149">
    <property type="entry name" value="Metallophos"/>
    <property type="match status" value="1"/>
</dbReference>
<dbReference type="Pfam" id="PF05184">
    <property type="entry name" value="SapB_1"/>
    <property type="match status" value="1"/>
</dbReference>
<dbReference type="PIRSF" id="PIRSF000948">
    <property type="entry name" value="Sphingomy_PDE"/>
    <property type="match status" value="1"/>
</dbReference>
<dbReference type="SMART" id="SM00741">
    <property type="entry name" value="SapB"/>
    <property type="match status" value="1"/>
</dbReference>
<dbReference type="SUPFAM" id="SSF56300">
    <property type="entry name" value="Metallo-dependent phosphatases"/>
    <property type="match status" value="1"/>
</dbReference>
<dbReference type="SUPFAM" id="SSF47862">
    <property type="entry name" value="Saposin"/>
    <property type="match status" value="1"/>
</dbReference>
<dbReference type="PROSITE" id="PS50015">
    <property type="entry name" value="SAP_B"/>
    <property type="match status" value="1"/>
</dbReference>
<organism>
    <name type="scientific">Caenorhabditis elegans</name>
    <dbReference type="NCBI Taxonomy" id="6239"/>
    <lineage>
        <taxon>Eukaryota</taxon>
        <taxon>Metazoa</taxon>
        <taxon>Ecdysozoa</taxon>
        <taxon>Nematoda</taxon>
        <taxon>Chromadorea</taxon>
        <taxon>Rhabditida</taxon>
        <taxon>Rhabditina</taxon>
        <taxon>Rhabditomorpha</taxon>
        <taxon>Rhabditoidea</taxon>
        <taxon>Rhabditidae</taxon>
        <taxon>Peloderinae</taxon>
        <taxon>Caenorhabditis</taxon>
    </lineage>
</organism>
<sequence length="618" mass="71925">MQQPLIILGIGIVLALVSNVESGVLRKPVDEHEYEKWTNARGNEAAVPPPKYKMLRYAKKAINEPENRKMSCLFCTFAVDGVQALIAQNSTDNEIAAFLVNLCDLFDVEQPHVCKNIIYAFKDEVVFVLERSVFTPEEICGAFIANCGHSDKPLTHMWNITIPGGKPPIKPWPKIPDNKPTFKVLHLSDIHIDHQYVVGTEAYCQLDSALGTYAMCCRDYSQDSQGAPTNLKDKPIYVPAGPWGMPYLCDLPYQTFESAMKHISKTFKDLDYIIITGDFEAHDSWDYTEDLTRENMNNMTNVFLEYFPGVPVYVSIGNHEGVPQDAMAPHTMPEYDTRGPQWLYKIMSEMWSHWIPQEALDTVQYRASYAVYPKPGLKLISLNTIYCSEFNFYLYVNEVDPDATLEWLIEELQDSENKGELVHIISHIPPGDNYCLKGWSWNFFEIVKRYENTIAQMFYGHTHYDQFMVYYDMDDPNRRPFHFNWISPSLTTYDWLNPAYRIYEIDGGYEGATYTVKDAKTYFANVTEANMKNKEPEWVLSYDTREHYQMADFSPQSWSDLSDKLWTNTTLFRDYVRLYYRNHYNNECYTDYKCRYTFVCDIKKGRSYDESFCDHLTK</sequence>
<accession>Q23498</accession>